<accession>Q5BL07</accession>
<accession>Q3UEC7</accession>
<accession>Q9CU85</accession>
<name>PEX1_MOUSE</name>
<protein>
    <recommendedName>
        <fullName evidence="7">Peroxisomal ATPase PEX1</fullName>
        <ecNumber evidence="1">3.6.4.-</ecNumber>
    </recommendedName>
    <alternativeName>
        <fullName evidence="7">Peroxin-1</fullName>
    </alternativeName>
    <alternativeName>
        <fullName evidence="7">Peroxisome biogenesis factor 1</fullName>
    </alternativeName>
</protein>
<comment type="function">
    <text evidence="1">Component of the PEX1-PEX6 AAA ATPase complex, a protein dislocase complex that mediates the ATP-dependent extraction of the PEX5 receptor from peroxisomal membranes, an essential step for PEX5 recycling. Specifically recognizes PEX5 monoubiquitinated at 'Cys-11', and pulls it out of the peroxisome lumen through the PEX2-PEX10-PEX12 retrotranslocation channel. Extraction by the PEX1-PEX6 AAA ATPase complex is accompanied by unfolding of the TPR repeats and release of bound cargo from PEX5.</text>
</comment>
<comment type="catalytic activity">
    <reaction evidence="1">
        <text>ATP + H2O = ADP + phosphate + H(+)</text>
        <dbReference type="Rhea" id="RHEA:13065"/>
        <dbReference type="ChEBI" id="CHEBI:15377"/>
        <dbReference type="ChEBI" id="CHEBI:15378"/>
        <dbReference type="ChEBI" id="CHEBI:30616"/>
        <dbReference type="ChEBI" id="CHEBI:43474"/>
        <dbReference type="ChEBI" id="CHEBI:456216"/>
    </reaction>
    <physiologicalReaction direction="left-to-right" evidence="1">
        <dbReference type="Rhea" id="RHEA:13066"/>
    </physiologicalReaction>
</comment>
<comment type="subunit">
    <text evidence="1">Homooligomer; homooligomerizes in the cytosol, interaction with PEX6 promotes dissociation of the homooligomer. Interacts with PEX6; forming the PEX1-PEX6 AAA ATPase complex, which is composed of a heterohexamer formed by a trimer of PEX1-PEX6 dimers. Interacts indirectly with PEX26, via its interaction with PEX6.</text>
</comment>
<comment type="subcellular location">
    <subcellularLocation>
        <location evidence="1">Cytoplasm</location>
        <location evidence="1">Cytosol</location>
    </subcellularLocation>
    <subcellularLocation>
        <location evidence="1">Peroxisome membrane</location>
    </subcellularLocation>
    <text evidence="1">Associated with peroxisomal membranes; anchored by PEX26 to peroxisome membranes.</text>
</comment>
<comment type="alternative products">
    <event type="alternative splicing"/>
    <isoform>
        <id>Q5BL07-1</id>
        <name>1</name>
        <sequence type="displayed"/>
    </isoform>
    <isoform>
        <id>Q5BL07-2</id>
        <name>2</name>
        <sequence type="described" ref="VSP_028131"/>
    </isoform>
</comment>
<comment type="domain">
    <text evidence="4">The N-terminal domain shows evolutionary conservation with that of VCP, and is able to bind phospholipids with a preference for phosphatidylinositol monophosphates.</text>
</comment>
<comment type="similarity">
    <text evidence="7">Belongs to the AAA ATPase family.</text>
</comment>
<evidence type="ECO:0000250" key="1">
    <source>
        <dbReference type="UniProtKB" id="O43933"/>
    </source>
</evidence>
<evidence type="ECO:0000255" key="2"/>
<evidence type="ECO:0000256" key="3">
    <source>
        <dbReference type="SAM" id="MobiDB-lite"/>
    </source>
</evidence>
<evidence type="ECO:0000269" key="4">
    <source>
    </source>
</evidence>
<evidence type="ECO:0000303" key="5">
    <source>
    </source>
</evidence>
<evidence type="ECO:0000303" key="6">
    <source>
    </source>
</evidence>
<evidence type="ECO:0000305" key="7"/>
<evidence type="ECO:0000312" key="8">
    <source>
        <dbReference type="MGI" id="MGI:1918632"/>
    </source>
</evidence>
<evidence type="ECO:0007829" key="9">
    <source>
        <dbReference type="PDB" id="1WLF"/>
    </source>
</evidence>
<reference key="1">
    <citation type="journal article" date="2004" name="Genome Res.">
        <title>The status, quality, and expansion of the NIH full-length cDNA project: the Mammalian Gene Collection (MGC).</title>
        <authorList>
            <consortium name="The MGC Project Team"/>
        </authorList>
    </citation>
    <scope>NUCLEOTIDE SEQUENCE [LARGE SCALE MRNA] (ISOFORM 2)</scope>
    <source>
        <strain>C57BL/6J</strain>
        <tissue>Brain</tissue>
    </source>
</reference>
<reference key="2">
    <citation type="journal article" date="2005" name="Science">
        <title>The transcriptional landscape of the mammalian genome.</title>
        <authorList>
            <person name="Carninci P."/>
            <person name="Kasukawa T."/>
            <person name="Katayama S."/>
            <person name="Gough J."/>
            <person name="Frith M.C."/>
            <person name="Maeda N."/>
            <person name="Oyama R."/>
            <person name="Ravasi T."/>
            <person name="Lenhard B."/>
            <person name="Wells C."/>
            <person name="Kodzius R."/>
            <person name="Shimokawa K."/>
            <person name="Bajic V.B."/>
            <person name="Brenner S.E."/>
            <person name="Batalov S."/>
            <person name="Forrest A.R."/>
            <person name="Zavolan M."/>
            <person name="Davis M.J."/>
            <person name="Wilming L.G."/>
            <person name="Aidinis V."/>
            <person name="Allen J.E."/>
            <person name="Ambesi-Impiombato A."/>
            <person name="Apweiler R."/>
            <person name="Aturaliya R.N."/>
            <person name="Bailey T.L."/>
            <person name="Bansal M."/>
            <person name="Baxter L."/>
            <person name="Beisel K.W."/>
            <person name="Bersano T."/>
            <person name="Bono H."/>
            <person name="Chalk A.M."/>
            <person name="Chiu K.P."/>
            <person name="Choudhary V."/>
            <person name="Christoffels A."/>
            <person name="Clutterbuck D.R."/>
            <person name="Crowe M.L."/>
            <person name="Dalla E."/>
            <person name="Dalrymple B.P."/>
            <person name="de Bono B."/>
            <person name="Della Gatta G."/>
            <person name="di Bernardo D."/>
            <person name="Down T."/>
            <person name="Engstrom P."/>
            <person name="Fagiolini M."/>
            <person name="Faulkner G."/>
            <person name="Fletcher C.F."/>
            <person name="Fukushima T."/>
            <person name="Furuno M."/>
            <person name="Futaki S."/>
            <person name="Gariboldi M."/>
            <person name="Georgii-Hemming P."/>
            <person name="Gingeras T.R."/>
            <person name="Gojobori T."/>
            <person name="Green R.E."/>
            <person name="Gustincich S."/>
            <person name="Harbers M."/>
            <person name="Hayashi Y."/>
            <person name="Hensch T.K."/>
            <person name="Hirokawa N."/>
            <person name="Hill D."/>
            <person name="Huminiecki L."/>
            <person name="Iacono M."/>
            <person name="Ikeo K."/>
            <person name="Iwama A."/>
            <person name="Ishikawa T."/>
            <person name="Jakt M."/>
            <person name="Kanapin A."/>
            <person name="Katoh M."/>
            <person name="Kawasawa Y."/>
            <person name="Kelso J."/>
            <person name="Kitamura H."/>
            <person name="Kitano H."/>
            <person name="Kollias G."/>
            <person name="Krishnan S.P."/>
            <person name="Kruger A."/>
            <person name="Kummerfeld S.K."/>
            <person name="Kurochkin I.V."/>
            <person name="Lareau L.F."/>
            <person name="Lazarevic D."/>
            <person name="Lipovich L."/>
            <person name="Liu J."/>
            <person name="Liuni S."/>
            <person name="McWilliam S."/>
            <person name="Madan Babu M."/>
            <person name="Madera M."/>
            <person name="Marchionni L."/>
            <person name="Matsuda H."/>
            <person name="Matsuzawa S."/>
            <person name="Miki H."/>
            <person name="Mignone F."/>
            <person name="Miyake S."/>
            <person name="Morris K."/>
            <person name="Mottagui-Tabar S."/>
            <person name="Mulder N."/>
            <person name="Nakano N."/>
            <person name="Nakauchi H."/>
            <person name="Ng P."/>
            <person name="Nilsson R."/>
            <person name="Nishiguchi S."/>
            <person name="Nishikawa S."/>
            <person name="Nori F."/>
            <person name="Ohara O."/>
            <person name="Okazaki Y."/>
            <person name="Orlando V."/>
            <person name="Pang K.C."/>
            <person name="Pavan W.J."/>
            <person name="Pavesi G."/>
            <person name="Pesole G."/>
            <person name="Petrovsky N."/>
            <person name="Piazza S."/>
            <person name="Reed J."/>
            <person name="Reid J.F."/>
            <person name="Ring B.Z."/>
            <person name="Ringwald M."/>
            <person name="Rost B."/>
            <person name="Ruan Y."/>
            <person name="Salzberg S.L."/>
            <person name="Sandelin A."/>
            <person name="Schneider C."/>
            <person name="Schoenbach C."/>
            <person name="Sekiguchi K."/>
            <person name="Semple C.A."/>
            <person name="Seno S."/>
            <person name="Sessa L."/>
            <person name="Sheng Y."/>
            <person name="Shibata Y."/>
            <person name="Shimada H."/>
            <person name="Shimada K."/>
            <person name="Silva D."/>
            <person name="Sinclair B."/>
            <person name="Sperling S."/>
            <person name="Stupka E."/>
            <person name="Sugiura K."/>
            <person name="Sultana R."/>
            <person name="Takenaka Y."/>
            <person name="Taki K."/>
            <person name="Tammoja K."/>
            <person name="Tan S.L."/>
            <person name="Tang S."/>
            <person name="Taylor M.S."/>
            <person name="Tegner J."/>
            <person name="Teichmann S.A."/>
            <person name="Ueda H.R."/>
            <person name="van Nimwegen E."/>
            <person name="Verardo R."/>
            <person name="Wei C.L."/>
            <person name="Yagi K."/>
            <person name="Yamanishi H."/>
            <person name="Zabarovsky E."/>
            <person name="Zhu S."/>
            <person name="Zimmer A."/>
            <person name="Hide W."/>
            <person name="Bult C."/>
            <person name="Grimmond S.M."/>
            <person name="Teasdale R.D."/>
            <person name="Liu E.T."/>
            <person name="Brusic V."/>
            <person name="Quackenbush J."/>
            <person name="Wahlestedt C."/>
            <person name="Mattick J.S."/>
            <person name="Hume D.A."/>
            <person name="Kai C."/>
            <person name="Sasaki D."/>
            <person name="Tomaru Y."/>
            <person name="Fukuda S."/>
            <person name="Kanamori-Katayama M."/>
            <person name="Suzuki M."/>
            <person name="Aoki J."/>
            <person name="Arakawa T."/>
            <person name="Iida J."/>
            <person name="Imamura K."/>
            <person name="Itoh M."/>
            <person name="Kato T."/>
            <person name="Kawaji H."/>
            <person name="Kawagashira N."/>
            <person name="Kawashima T."/>
            <person name="Kojima M."/>
            <person name="Kondo S."/>
            <person name="Konno H."/>
            <person name="Nakano K."/>
            <person name="Ninomiya N."/>
            <person name="Nishio T."/>
            <person name="Okada M."/>
            <person name="Plessy C."/>
            <person name="Shibata K."/>
            <person name="Shiraki T."/>
            <person name="Suzuki S."/>
            <person name="Tagami M."/>
            <person name="Waki K."/>
            <person name="Watahiki A."/>
            <person name="Okamura-Oho Y."/>
            <person name="Suzuki H."/>
            <person name="Kawai J."/>
            <person name="Hayashizaki Y."/>
        </authorList>
    </citation>
    <scope>NUCLEOTIDE SEQUENCE [LARGE SCALE MRNA] OF 1-505 AND 795-1284 (ISOFORM 1)</scope>
    <source>
        <strain>C57BL/6J</strain>
        <tissue>Head</tissue>
        <tissue>Liver</tissue>
    </source>
</reference>
<reference key="3">
    <citation type="journal article" date="2006" name="FEBS J.">
        <title>The common phospholipid-binding activity of the N-terminal domains of PEX1 and VCP/p97.</title>
        <authorList>
            <person name="Shiozawa K."/>
            <person name="Goda N."/>
            <person name="Shimizu T."/>
            <person name="Mizuguchi K."/>
            <person name="Kondo N."/>
            <person name="Shimozawa N."/>
            <person name="Shirakawa M."/>
            <person name="Hiroaki H."/>
        </authorList>
    </citation>
    <scope>PHOSPHOLIPID BINDING</scope>
    <scope>MUTAGENESIS OF ARG-135 AND LYS-174</scope>
</reference>
<reference key="4">
    <citation type="journal article" date="2007" name="Proc. Natl. Acad. Sci. U.S.A.">
        <title>Large-scale phosphorylation analysis of mouse liver.</title>
        <authorList>
            <person name="Villen J."/>
            <person name="Beausoleil S.A."/>
            <person name="Gerber S.A."/>
            <person name="Gygi S.P."/>
        </authorList>
    </citation>
    <scope>IDENTIFICATION BY MASS SPECTROMETRY [LARGE SCALE ANALYSIS]</scope>
    <source>
        <tissue>Liver</tissue>
    </source>
</reference>
<reference key="5">
    <citation type="journal article" date="2008" name="J. Proteome Res.">
        <title>Specific phosphopeptide enrichment with immobilized titanium ion affinity chromatography adsorbent for phosphoproteome analysis.</title>
        <authorList>
            <person name="Zhou H."/>
            <person name="Ye M."/>
            <person name="Dong J."/>
            <person name="Han G."/>
            <person name="Jiang X."/>
            <person name="Wu R."/>
            <person name="Zou H."/>
        </authorList>
    </citation>
    <scope>IDENTIFICATION BY MASS SPECTROMETRY [LARGE SCALE ANALYSIS]</scope>
    <source>
        <tissue>Liver</tissue>
    </source>
</reference>
<reference key="6">
    <citation type="journal article" date="2010" name="Cell">
        <title>A tissue-specific atlas of mouse protein phosphorylation and expression.</title>
        <authorList>
            <person name="Huttlin E.L."/>
            <person name="Jedrychowski M.P."/>
            <person name="Elias J.E."/>
            <person name="Goswami T."/>
            <person name="Rad R."/>
            <person name="Beausoleil S.A."/>
            <person name="Villen J."/>
            <person name="Haas W."/>
            <person name="Sowa M.E."/>
            <person name="Gygi S.P."/>
        </authorList>
    </citation>
    <scope>IDENTIFICATION BY MASS SPECTROMETRY [LARGE SCALE ANALYSIS]</scope>
    <source>
        <tissue>Brain</tissue>
        <tissue>Brown adipose tissue</tissue>
        <tissue>Heart</tissue>
        <tissue>Kidney</tissue>
        <tissue>Liver</tissue>
        <tissue>Lung</tissue>
        <tissue>Spleen</tissue>
        <tissue>Testis</tissue>
    </source>
</reference>
<reference key="7">
    <citation type="journal article" date="2004" name="J. Biol. Chem.">
        <title>Structure of the N-terminal domain of PEX1 AAA-ATPase. Characterization of a putative adaptor-binding domain.</title>
        <authorList>
            <person name="Shiozawa K."/>
            <person name="Maita N."/>
            <person name="Tomii K."/>
            <person name="Seto A."/>
            <person name="Goda N."/>
            <person name="Akiyama Y."/>
            <person name="Shimizu T."/>
            <person name="Shirakawa M."/>
            <person name="Hiroaki H."/>
        </authorList>
    </citation>
    <scope>X-RAY CRYSTALLOGRAPHY (2.05 ANGSTROMS) OF 3-181</scope>
</reference>
<feature type="chain" id="PRO_0000304931" description="Peroxisomal ATPase PEX1">
    <location>
        <begin position="1"/>
        <end position="1284"/>
    </location>
</feature>
<feature type="region of interest" description="Disordered" evidence="3">
    <location>
        <begin position="339"/>
        <end position="373"/>
    </location>
</feature>
<feature type="region of interest" description="Disordered" evidence="3">
    <location>
        <begin position="1261"/>
        <end position="1284"/>
    </location>
</feature>
<feature type="compositionally biased region" description="Basic and acidic residues" evidence="3">
    <location>
        <begin position="343"/>
        <end position="373"/>
    </location>
</feature>
<feature type="compositionally biased region" description="Polar residues" evidence="3">
    <location>
        <begin position="1270"/>
        <end position="1284"/>
    </location>
</feature>
<feature type="binding site" evidence="2">
    <location>
        <begin position="600"/>
        <end position="607"/>
    </location>
    <ligand>
        <name>ATP</name>
        <dbReference type="ChEBI" id="CHEBI:30616"/>
    </ligand>
</feature>
<feature type="binding site" evidence="2">
    <location>
        <begin position="882"/>
        <end position="889"/>
    </location>
    <ligand>
        <name>ATP</name>
        <dbReference type="ChEBI" id="CHEBI:30616"/>
    </ligand>
</feature>
<feature type="modified residue" description="Phosphoserine" evidence="1">
    <location>
        <position position="1182"/>
    </location>
</feature>
<feature type="modified residue" description="Phosphoserine" evidence="1">
    <location>
        <position position="1210"/>
    </location>
</feature>
<feature type="modified residue" description="Phosphoserine" evidence="1">
    <location>
        <position position="1212"/>
    </location>
</feature>
<feature type="splice variant" id="VSP_028131" description="In isoform 2." evidence="5">
    <location>
        <begin position="413"/>
        <end position="452"/>
    </location>
</feature>
<feature type="mutagenesis site" description="Loss of phospholipid-binding." evidence="4">
    <original>R</original>
    <variation>A</variation>
    <location>
        <position position="135"/>
    </location>
</feature>
<feature type="mutagenesis site" description="No effect on phospholipid-binding." evidence="4">
    <original>K</original>
    <variation>A</variation>
    <location>
        <position position="174"/>
    </location>
</feature>
<feature type="strand" evidence="9">
    <location>
        <begin position="15"/>
        <end position="22"/>
    </location>
</feature>
<feature type="strand" evidence="9">
    <location>
        <begin position="25"/>
        <end position="27"/>
    </location>
</feature>
<feature type="strand" evidence="9">
    <location>
        <begin position="29"/>
        <end position="31"/>
    </location>
</feature>
<feature type="helix" evidence="9">
    <location>
        <begin position="33"/>
        <end position="38"/>
    </location>
</feature>
<feature type="strand" evidence="9">
    <location>
        <begin position="47"/>
        <end position="53"/>
    </location>
</feature>
<feature type="strand" evidence="9">
    <location>
        <begin position="56"/>
        <end position="58"/>
    </location>
</feature>
<feature type="strand" evidence="9">
    <location>
        <begin position="60"/>
        <end position="62"/>
    </location>
</feature>
<feature type="strand" evidence="9">
    <location>
        <begin position="73"/>
        <end position="77"/>
    </location>
</feature>
<feature type="helix" evidence="9">
    <location>
        <begin position="78"/>
        <end position="83"/>
    </location>
</feature>
<feature type="strand" evidence="9">
    <location>
        <begin position="91"/>
        <end position="96"/>
    </location>
</feature>
<feature type="strand" evidence="9">
    <location>
        <begin position="104"/>
        <end position="112"/>
    </location>
</feature>
<feature type="helix" evidence="9">
    <location>
        <begin position="113"/>
        <end position="121"/>
    </location>
</feature>
<feature type="helix" evidence="9">
    <location>
        <begin position="126"/>
        <end position="133"/>
    </location>
</feature>
<feature type="strand" evidence="9">
    <location>
        <begin position="142"/>
        <end position="150"/>
    </location>
</feature>
<feature type="strand" evidence="9">
    <location>
        <begin position="152"/>
        <end position="162"/>
    </location>
</feature>
<feature type="strand" evidence="9">
    <location>
        <begin position="165"/>
        <end position="168"/>
    </location>
</feature>
<feature type="strand" evidence="9">
    <location>
        <begin position="174"/>
        <end position="177"/>
    </location>
</feature>
<organism>
    <name type="scientific">Mus musculus</name>
    <name type="common">Mouse</name>
    <dbReference type="NCBI Taxonomy" id="10090"/>
    <lineage>
        <taxon>Eukaryota</taxon>
        <taxon>Metazoa</taxon>
        <taxon>Chordata</taxon>
        <taxon>Craniata</taxon>
        <taxon>Vertebrata</taxon>
        <taxon>Euteleostomi</taxon>
        <taxon>Mammalia</taxon>
        <taxon>Eutheria</taxon>
        <taxon>Euarchontoglires</taxon>
        <taxon>Glires</taxon>
        <taxon>Rodentia</taxon>
        <taxon>Myomorpha</taxon>
        <taxon>Muroidea</taxon>
        <taxon>Muridae</taxon>
        <taxon>Murinae</taxon>
        <taxon>Mus</taxon>
        <taxon>Mus</taxon>
    </lineage>
</organism>
<keyword id="KW-0002">3D-structure</keyword>
<keyword id="KW-0025">Alternative splicing</keyword>
<keyword id="KW-0067">ATP-binding</keyword>
<keyword id="KW-0963">Cytoplasm</keyword>
<keyword id="KW-0378">Hydrolase</keyword>
<keyword id="KW-0446">Lipid-binding</keyword>
<keyword id="KW-0472">Membrane</keyword>
<keyword id="KW-0547">Nucleotide-binding</keyword>
<keyword id="KW-0576">Peroxisome</keyword>
<keyword id="KW-0962">Peroxisome biogenesis</keyword>
<keyword id="KW-0958">Peroxisome biogenesis disorder</keyword>
<keyword id="KW-0597">Phosphoprotein</keyword>
<keyword id="KW-0653">Protein transport</keyword>
<keyword id="KW-1185">Reference proteome</keyword>
<keyword id="KW-0677">Repeat</keyword>
<keyword id="KW-0813">Transport</keyword>
<sequence length="1284" mass="141428">MWSSDRLAGAGSGGAVVTVAFTNARDCFLHLPRRLVAQLHLLQNQAIEVASDHQPTYLSWVEGRHFNDQSENVAEINRQVGQKLGLSSGDQVFLRPCSHVVSCQQVEVEPLSADDWEILELHAISLEQHLLDQIRIVFPKAVVPIWVDQQTYIFIQIVTLMPAAPYGRLETNTKLLIQPKTRQAKESTFPKEGDAHGQVHSYGREQKGLSKELQTRQLHTNSEGITASNGRDPKVPGGPLKPSWWAVLGSMLSFGPDSKQESAWGSLELGAFKNMQSQAAPLEGTFRVCQVQPPSARTTTATSVFHKHCTAHVFPWDQEYFDVEPSFTVTYGKLVKLHSPKQQQDKSKQGVLLPDKEKQLSKSPDHKQISSNRSEEAAEACVLKVVWNGLEELKNATEFTESLELLHRGKVWIPDDLRKRLNIEMHAVVRITPLETTPKIPRSLKLQPRENLPKDVNEETIKTVFSSWVQQSATTMLPLVISKEERIKLEIKDGLREFSLSTVHSQEKEKEEGKTVFVLSSILLQKISVQVLLEPMIKEEQSAEIDFLLPSLTLSSLGGVSALGASAMEHITHSLLGRPLSRQLMALVAGLRNGALLITGGKGSGKSTFAKAICKEAQDTLDARVETVDCKALRGKRLESIQKALEVAFSEAAWRQPSVILLDDLDLIAGLPSVPEQEHSPEAVQSQRLAHALNDMIKEFVSTGSLVALIATSQLQQSLHPSLVSAQGIHTFQCVQHLQPPNPEQRCEILHSVVKNKLGCDISNFPDLDLQCIAKDTEAFVARDFTVLVDRAIHSSLSRQHSSSREDLTLTTSDFQKALRGFLPASLRNVNLHKPRDLGWDKIGGLHEVRQILMDTIQLPAKYPELFANLPIRQRTGILLYGPPGTGKTLLAGVVARESGMNFISIKGPELLSKYIGASEQAVRDVFIRAQAAKPCILFFDEFESIAPRRGHDNTGVTDRVVNQLLTQLDGVEGLQGVYVLAATSRPDLIDPALLRPGRLDKCVYCPPPDQVSRLEILTVLSKSLALADDVDLQHVASVTDSFTGADLKALLYNAQLEALQGRLLPSGLPDGGSSSDSDLSLSSMVFLNHSSGSDDSAGDGECGLEQSLLSLEMSEILPDESKFNMYRLYFGSSYESELGNGTPSDLSSHCLSAPSSVTQDLPAAPGKDPLFTQHPVFRTPSQEGCQDLTQEQRDQLRAEISIIKGRYRSQSGEDESLNQPGPIKTTFAISQAHLMTALAHTRPSISEDEGKEFAELYENFQNPKKRKNQSGTVFRTGQKVTLA</sequence>
<dbReference type="EC" id="3.6.4.-" evidence="1"/>
<dbReference type="EMBL" id="BC090845">
    <property type="protein sequence ID" value="AAH90845.1"/>
    <property type="molecule type" value="mRNA"/>
</dbReference>
<dbReference type="EMBL" id="AK017309">
    <property type="protein sequence ID" value="BAB30684.1"/>
    <property type="molecule type" value="mRNA"/>
</dbReference>
<dbReference type="EMBL" id="AK149599">
    <property type="protein sequence ID" value="BAE28984.1"/>
    <property type="molecule type" value="mRNA"/>
</dbReference>
<dbReference type="CCDS" id="CCDS19065.1">
    <molecule id="Q5BL07-2"/>
</dbReference>
<dbReference type="CCDS" id="CCDS80201.1">
    <molecule id="Q5BL07-1"/>
</dbReference>
<dbReference type="RefSeq" id="NP_001280735.1">
    <molecule id="Q5BL07-1"/>
    <property type="nucleotide sequence ID" value="NM_001293806.1"/>
</dbReference>
<dbReference type="RefSeq" id="NP_082053.1">
    <molecule id="Q5BL07-2"/>
    <property type="nucleotide sequence ID" value="NM_027777.2"/>
</dbReference>
<dbReference type="PDB" id="1WLF">
    <property type="method" value="X-ray"/>
    <property type="resolution" value="2.05 A"/>
    <property type="chains" value="A=3-181"/>
</dbReference>
<dbReference type="PDBsum" id="1WLF"/>
<dbReference type="SMR" id="Q5BL07"/>
<dbReference type="BioGRID" id="214674">
    <property type="interactions" value="3"/>
</dbReference>
<dbReference type="FunCoup" id="Q5BL07">
    <property type="interactions" value="3715"/>
</dbReference>
<dbReference type="IntAct" id="Q5BL07">
    <property type="interactions" value="3"/>
</dbReference>
<dbReference type="STRING" id="10090.ENSMUSP00000113304"/>
<dbReference type="GlyGen" id="Q5BL07">
    <property type="glycosylation" value="1 site, 1 N-linked glycan (1 site)"/>
</dbReference>
<dbReference type="iPTMnet" id="Q5BL07"/>
<dbReference type="PhosphoSitePlus" id="Q5BL07"/>
<dbReference type="SwissPalm" id="Q5BL07"/>
<dbReference type="jPOST" id="Q5BL07"/>
<dbReference type="PaxDb" id="10090-ENSMUSP00000006061"/>
<dbReference type="PeptideAtlas" id="Q5BL07"/>
<dbReference type="ProteomicsDB" id="288098">
    <molecule id="Q5BL07-1"/>
</dbReference>
<dbReference type="ProteomicsDB" id="288099">
    <molecule id="Q5BL07-2"/>
</dbReference>
<dbReference type="Pumba" id="Q5BL07"/>
<dbReference type="Antibodypedia" id="15612">
    <property type="antibodies" value="191 antibodies from 31 providers"/>
</dbReference>
<dbReference type="DNASU" id="71382"/>
<dbReference type="Ensembl" id="ENSMUST00000006061.13">
    <molecule id="Q5BL07-2"/>
    <property type="protein sequence ID" value="ENSMUSP00000006061.7"/>
    <property type="gene ID" value="ENSMUSG00000005907.15"/>
</dbReference>
<dbReference type="Ensembl" id="ENSMUST00000121291.8">
    <molecule id="Q5BL07-1"/>
    <property type="protein sequence ID" value="ENSMUSP00000113304.2"/>
    <property type="gene ID" value="ENSMUSG00000005907.15"/>
</dbReference>
<dbReference type="GeneID" id="71382"/>
<dbReference type="KEGG" id="mmu:71382"/>
<dbReference type="UCSC" id="uc008whe.2">
    <molecule id="Q5BL07-1"/>
    <property type="organism name" value="mouse"/>
</dbReference>
<dbReference type="UCSC" id="uc008whf.2">
    <molecule id="Q5BL07-2"/>
    <property type="organism name" value="mouse"/>
</dbReference>
<dbReference type="AGR" id="MGI:1918632"/>
<dbReference type="CTD" id="5189"/>
<dbReference type="MGI" id="MGI:1918632">
    <property type="gene designation" value="Pex1"/>
</dbReference>
<dbReference type="VEuPathDB" id="HostDB:ENSMUSG00000005907"/>
<dbReference type="eggNOG" id="KOG0735">
    <property type="taxonomic scope" value="Eukaryota"/>
</dbReference>
<dbReference type="GeneTree" id="ENSGT00550000075032"/>
<dbReference type="HOGENOM" id="CLU_000688_1_1_1"/>
<dbReference type="InParanoid" id="Q5BL07"/>
<dbReference type="OMA" id="QGFVNIQ"/>
<dbReference type="OrthoDB" id="8173462at2759"/>
<dbReference type="PhylomeDB" id="Q5BL07"/>
<dbReference type="TreeFam" id="TF106447"/>
<dbReference type="BRENDA" id="3.6.4.7">
    <property type="organism ID" value="3474"/>
</dbReference>
<dbReference type="Reactome" id="R-MMU-9033241">
    <property type="pathway name" value="Peroxisomal protein import"/>
</dbReference>
<dbReference type="BioGRID-ORCS" id="71382">
    <property type="hits" value="14 hits in 77 CRISPR screens"/>
</dbReference>
<dbReference type="ChiTaRS" id="Pex1">
    <property type="organism name" value="mouse"/>
</dbReference>
<dbReference type="EvolutionaryTrace" id="Q5BL07"/>
<dbReference type="PRO" id="PR:Q5BL07"/>
<dbReference type="Proteomes" id="UP000000589">
    <property type="component" value="Chromosome 5"/>
</dbReference>
<dbReference type="RNAct" id="Q5BL07">
    <property type="molecule type" value="protein"/>
</dbReference>
<dbReference type="Bgee" id="ENSMUSG00000005907">
    <property type="expression patterns" value="Expressed in animal zygote and 228 other cell types or tissues"/>
</dbReference>
<dbReference type="ExpressionAtlas" id="Q5BL07">
    <property type="expression patterns" value="baseline and differential"/>
</dbReference>
<dbReference type="GO" id="GO:0005829">
    <property type="term" value="C:cytosol"/>
    <property type="evidence" value="ECO:0007669"/>
    <property type="project" value="UniProtKB-SubCell"/>
</dbReference>
<dbReference type="GO" id="GO:0005778">
    <property type="term" value="C:peroxisomal membrane"/>
    <property type="evidence" value="ECO:0000250"/>
    <property type="project" value="UniProtKB"/>
</dbReference>
<dbReference type="GO" id="GO:0005777">
    <property type="term" value="C:peroxisome"/>
    <property type="evidence" value="ECO:0000314"/>
    <property type="project" value="HGNC-UCL"/>
</dbReference>
<dbReference type="GO" id="GO:0005524">
    <property type="term" value="F:ATP binding"/>
    <property type="evidence" value="ECO:0007669"/>
    <property type="project" value="UniProtKB-KW"/>
</dbReference>
<dbReference type="GO" id="GO:0016887">
    <property type="term" value="F:ATP hydrolysis activity"/>
    <property type="evidence" value="ECO:0007669"/>
    <property type="project" value="Ensembl"/>
</dbReference>
<dbReference type="GO" id="GO:0008289">
    <property type="term" value="F:lipid binding"/>
    <property type="evidence" value="ECO:0007669"/>
    <property type="project" value="UniProtKB-KW"/>
</dbReference>
<dbReference type="GO" id="GO:0140318">
    <property type="term" value="F:protein transporter activity"/>
    <property type="evidence" value="ECO:0000250"/>
    <property type="project" value="UniProtKB"/>
</dbReference>
<dbReference type="GO" id="GO:0044877">
    <property type="term" value="F:protein-containing complex binding"/>
    <property type="evidence" value="ECO:0007669"/>
    <property type="project" value="Ensembl"/>
</dbReference>
<dbReference type="GO" id="GO:0140036">
    <property type="term" value="F:ubiquitin-modified protein reader activity"/>
    <property type="evidence" value="ECO:0000250"/>
    <property type="project" value="UniProtKB"/>
</dbReference>
<dbReference type="GO" id="GO:0060152">
    <property type="term" value="P:microtubule-based peroxisome localization"/>
    <property type="evidence" value="ECO:0000266"/>
    <property type="project" value="MGI"/>
</dbReference>
<dbReference type="GO" id="GO:0016562">
    <property type="term" value="P:protein import into peroxisome matrix, receptor recycling"/>
    <property type="evidence" value="ECO:0000250"/>
    <property type="project" value="UniProtKB"/>
</dbReference>
<dbReference type="GO" id="GO:0006625">
    <property type="term" value="P:protein targeting to peroxisome"/>
    <property type="evidence" value="ECO:0007669"/>
    <property type="project" value="Ensembl"/>
</dbReference>
<dbReference type="GO" id="GO:0043335">
    <property type="term" value="P:protein unfolding"/>
    <property type="evidence" value="ECO:0000250"/>
    <property type="project" value="UniProtKB"/>
</dbReference>
<dbReference type="CDD" id="cd19526">
    <property type="entry name" value="RecA-like_PEX1_r2"/>
    <property type="match status" value="1"/>
</dbReference>
<dbReference type="FunFam" id="1.10.8.60:FF:000067">
    <property type="entry name" value="Peroxisomal biogenesis factor 1"/>
    <property type="match status" value="1"/>
</dbReference>
<dbReference type="FunFam" id="1.10.8.60:FF:000089">
    <property type="entry name" value="Peroxisomal biogenesis factor 1"/>
    <property type="match status" value="1"/>
</dbReference>
<dbReference type="FunFam" id="3.40.50.300:FF:000966">
    <property type="entry name" value="Peroxisomal biogenesis factor 1"/>
    <property type="match status" value="1"/>
</dbReference>
<dbReference type="FunFam" id="3.40.50.300:FF:001852">
    <property type="entry name" value="Peroxisomal biogenesis factor 1"/>
    <property type="match status" value="1"/>
</dbReference>
<dbReference type="FunFam" id="3.10.330.10:FF:000004">
    <property type="entry name" value="Peroxisome biogenesis factor 1"/>
    <property type="match status" value="1"/>
</dbReference>
<dbReference type="FunFam" id="2.40.40.20:FF:000016">
    <property type="entry name" value="peroxisome biogenesis factor 1"/>
    <property type="match status" value="1"/>
</dbReference>
<dbReference type="Gene3D" id="1.10.8.60">
    <property type="match status" value="2"/>
</dbReference>
<dbReference type="Gene3D" id="2.40.40.20">
    <property type="match status" value="1"/>
</dbReference>
<dbReference type="Gene3D" id="3.10.330.10">
    <property type="match status" value="1"/>
</dbReference>
<dbReference type="Gene3D" id="3.40.50.300">
    <property type="entry name" value="P-loop containing nucleotide triphosphate hydrolases"/>
    <property type="match status" value="2"/>
</dbReference>
<dbReference type="InterPro" id="IPR003593">
    <property type="entry name" value="AAA+_ATPase"/>
</dbReference>
<dbReference type="InterPro" id="IPR050168">
    <property type="entry name" value="AAA_ATPase_domain"/>
</dbReference>
<dbReference type="InterPro" id="IPR041569">
    <property type="entry name" value="AAA_lid_3"/>
</dbReference>
<dbReference type="InterPro" id="IPR009010">
    <property type="entry name" value="Asp_de-COase-like_dom_sf"/>
</dbReference>
<dbReference type="InterPro" id="IPR003959">
    <property type="entry name" value="ATPase_AAA_core"/>
</dbReference>
<dbReference type="InterPro" id="IPR003960">
    <property type="entry name" value="ATPase_AAA_CS"/>
</dbReference>
<dbReference type="InterPro" id="IPR029067">
    <property type="entry name" value="CDC48_domain_2-like_sf"/>
</dbReference>
<dbReference type="InterPro" id="IPR027417">
    <property type="entry name" value="P-loop_NTPase"/>
</dbReference>
<dbReference type="InterPro" id="IPR015343">
    <property type="entry name" value="PEX1-N-lobe"/>
</dbReference>
<dbReference type="InterPro" id="IPR015342">
    <property type="entry name" value="PEX1-N_C-lobe"/>
</dbReference>
<dbReference type="PANTHER" id="PTHR23077">
    <property type="entry name" value="AAA-FAMILY ATPASE"/>
    <property type="match status" value="1"/>
</dbReference>
<dbReference type="PANTHER" id="PTHR23077:SF12">
    <property type="entry name" value="PEROXISOMAL ATPASE PEX1"/>
    <property type="match status" value="1"/>
</dbReference>
<dbReference type="Pfam" id="PF00004">
    <property type="entry name" value="AAA"/>
    <property type="match status" value="2"/>
</dbReference>
<dbReference type="Pfam" id="PF17862">
    <property type="entry name" value="AAA_lid_3"/>
    <property type="match status" value="1"/>
</dbReference>
<dbReference type="Pfam" id="PF09262">
    <property type="entry name" value="PEX-1N"/>
    <property type="match status" value="1"/>
</dbReference>
<dbReference type="Pfam" id="PF09263">
    <property type="entry name" value="PEX-2N"/>
    <property type="match status" value="1"/>
</dbReference>
<dbReference type="SMART" id="SM00382">
    <property type="entry name" value="AAA"/>
    <property type="match status" value="2"/>
</dbReference>
<dbReference type="SUPFAM" id="SSF50692">
    <property type="entry name" value="ADC-like"/>
    <property type="match status" value="1"/>
</dbReference>
<dbReference type="SUPFAM" id="SSF54585">
    <property type="entry name" value="Cdc48 domain 2-like"/>
    <property type="match status" value="1"/>
</dbReference>
<dbReference type="SUPFAM" id="SSF52540">
    <property type="entry name" value="P-loop containing nucleoside triphosphate hydrolases"/>
    <property type="match status" value="2"/>
</dbReference>
<dbReference type="PROSITE" id="PS00674">
    <property type="entry name" value="AAA"/>
    <property type="match status" value="1"/>
</dbReference>
<gene>
    <name evidence="6 8" type="primary">Pex1</name>
</gene>
<proteinExistence type="evidence at protein level"/>